<feature type="initiator methionine" description="Removed" evidence="2">
    <location>
        <position position="1"/>
    </location>
</feature>
<feature type="chain" id="PRO_0000277802" description="E3 ubiquitin-protein ligase ZNRF1">
    <location>
        <begin position="2"/>
        <end position="195"/>
    </location>
</feature>
<feature type="zinc finger region" description="RING-type; atypical" evidence="3">
    <location>
        <begin position="152"/>
        <end position="193"/>
    </location>
</feature>
<feature type="region of interest" description="Disordered" evidence="4">
    <location>
        <begin position="1"/>
        <end position="37"/>
    </location>
</feature>
<feature type="compositionally biased region" description="Polar residues" evidence="4">
    <location>
        <begin position="1"/>
        <end position="10"/>
    </location>
</feature>
<feature type="compositionally biased region" description="Low complexity" evidence="4">
    <location>
        <begin position="18"/>
        <end position="29"/>
    </location>
</feature>
<feature type="lipid moiety-binding region" description="N-myristoyl glycine" evidence="2">
    <location>
        <position position="2"/>
    </location>
</feature>
<feature type="sequence conflict" description="In Ref. 1; AAH47964." evidence="5" ref="1">
    <original>P</original>
    <variation>T</variation>
    <location>
        <position position="26"/>
    </location>
</feature>
<comment type="function">
    <text evidence="1">E3 ubiquitin-protein ligase that plays a role in neuron cells differentiation. Plays a role in the establishment and maintenance of neuronal transmission and plasticity.</text>
</comment>
<comment type="catalytic activity">
    <reaction>
        <text>S-ubiquitinyl-[E2 ubiquitin-conjugating enzyme]-L-cysteine + [acceptor protein]-L-lysine = [E2 ubiquitin-conjugating enzyme]-L-cysteine + N(6)-ubiquitinyl-[acceptor protein]-L-lysine.</text>
        <dbReference type="EC" id="2.3.2.27"/>
    </reaction>
</comment>
<comment type="pathway">
    <text>Protein modification; protein ubiquitination.</text>
</comment>
<comment type="subcellular location">
    <subcellularLocation>
        <location evidence="1">Endosome</location>
    </subcellularLocation>
    <subcellularLocation>
        <location evidence="1">Lysosome</location>
    </subcellularLocation>
    <subcellularLocation>
        <location evidence="1">Membrane</location>
        <topology evidence="1">Peripheral membrane protein</topology>
    </subcellularLocation>
</comment>
<comment type="domain">
    <text evidence="1">The RING-type zinc finger domain is required for E3 ligase activity.</text>
</comment>
<evidence type="ECO:0000250" key="1"/>
<evidence type="ECO:0000255" key="2"/>
<evidence type="ECO:0000255" key="3">
    <source>
        <dbReference type="PROSITE-ProRule" id="PRU00175"/>
    </source>
</evidence>
<evidence type="ECO:0000256" key="4">
    <source>
        <dbReference type="SAM" id="MobiDB-lite"/>
    </source>
</evidence>
<evidence type="ECO:0000305" key="5"/>
<organism>
    <name type="scientific">Xenopus laevis</name>
    <name type="common">African clawed frog</name>
    <dbReference type="NCBI Taxonomy" id="8355"/>
    <lineage>
        <taxon>Eukaryota</taxon>
        <taxon>Metazoa</taxon>
        <taxon>Chordata</taxon>
        <taxon>Craniata</taxon>
        <taxon>Vertebrata</taxon>
        <taxon>Euteleostomi</taxon>
        <taxon>Amphibia</taxon>
        <taxon>Batrachia</taxon>
        <taxon>Anura</taxon>
        <taxon>Pipoidea</taxon>
        <taxon>Pipidae</taxon>
        <taxon>Xenopodinae</taxon>
        <taxon>Xenopus</taxon>
        <taxon>Xenopus</taxon>
    </lineage>
</organism>
<name>ZNRF1_XENLA</name>
<reference key="1">
    <citation type="submission" date="2004-08" db="EMBL/GenBank/DDBJ databases">
        <authorList>
            <consortium name="NIH - Xenopus Gene Collection (XGC) project"/>
        </authorList>
    </citation>
    <scope>NUCLEOTIDE SEQUENCE [LARGE SCALE MRNA]</scope>
    <source>
        <tissue>Embryo</tissue>
        <tissue>Eye</tissue>
    </source>
</reference>
<gene>
    <name type="primary">znrf1</name>
</gene>
<accession>Q66KG7</accession>
<accession>Q801R3</accession>
<proteinExistence type="evidence at transcript level"/>
<protein>
    <recommendedName>
        <fullName>E3 ubiquitin-protein ligase ZNRF1</fullName>
        <ecNumber>2.3.2.27</ecNumber>
    </recommendedName>
    <alternativeName>
        <fullName>RING-type E3 ubiquitin transferase ZNRF1</fullName>
    </alternativeName>
    <alternativeName>
        <fullName>Zinc/RING finger protein 1</fullName>
    </alternativeName>
</protein>
<sequence length="195" mass="20732">MGGKQSSASRSRAPFPGVSSDDSAVPPSSNFGHFRGGGAMGLRSRSVSSVSGLDPPAAALPFGLYRAGPDTERGGGSGSEDSRGGLYLGSRASLADTLHITPRWIGAHSGFRCPICSKSVASDEMEMHFIMCLSKPRLSYNDDVLTRDAGECVICLEELSQGDTIARLPCLCIYHKSCIDSWFEVNRCCPEHPSD</sequence>
<keyword id="KW-0967">Endosome</keyword>
<keyword id="KW-0449">Lipoprotein</keyword>
<keyword id="KW-0458">Lysosome</keyword>
<keyword id="KW-0472">Membrane</keyword>
<keyword id="KW-0479">Metal-binding</keyword>
<keyword id="KW-0519">Myristate</keyword>
<keyword id="KW-1185">Reference proteome</keyword>
<keyword id="KW-0808">Transferase</keyword>
<keyword id="KW-0833">Ubl conjugation pathway</keyword>
<keyword id="KW-0862">Zinc</keyword>
<keyword id="KW-0863">Zinc-finger</keyword>
<dbReference type="EC" id="2.3.2.27"/>
<dbReference type="EMBL" id="BC047964">
    <property type="protein sequence ID" value="AAH47964.1"/>
    <property type="molecule type" value="mRNA"/>
</dbReference>
<dbReference type="EMBL" id="BC080402">
    <property type="protein sequence ID" value="AAH80402.1"/>
    <property type="molecule type" value="mRNA"/>
</dbReference>
<dbReference type="RefSeq" id="NP_001080802.1">
    <property type="nucleotide sequence ID" value="NM_001087333.1"/>
</dbReference>
<dbReference type="SMR" id="Q66KG7"/>
<dbReference type="DNASU" id="380496"/>
<dbReference type="GeneID" id="380496"/>
<dbReference type="KEGG" id="xla:380496"/>
<dbReference type="AGR" id="Xenbase:XB-GENE-998330"/>
<dbReference type="CTD" id="380496"/>
<dbReference type="Xenbase" id="XB-GENE-998330">
    <property type="gene designation" value="znrf1.S"/>
</dbReference>
<dbReference type="OMA" id="TPYAHGN"/>
<dbReference type="OrthoDB" id="10057496at2759"/>
<dbReference type="UniPathway" id="UPA00143"/>
<dbReference type="Proteomes" id="UP000186698">
    <property type="component" value="Chromosome 4S"/>
</dbReference>
<dbReference type="Bgee" id="380496">
    <property type="expression patterns" value="Expressed in egg cell and 19 other cell types or tissues"/>
</dbReference>
<dbReference type="GO" id="GO:0005737">
    <property type="term" value="C:cytoplasm"/>
    <property type="evidence" value="ECO:0000318"/>
    <property type="project" value="GO_Central"/>
</dbReference>
<dbReference type="GO" id="GO:0005768">
    <property type="term" value="C:endosome"/>
    <property type="evidence" value="ECO:0007669"/>
    <property type="project" value="UniProtKB-SubCell"/>
</dbReference>
<dbReference type="GO" id="GO:0043231">
    <property type="term" value="C:intracellular membrane-bounded organelle"/>
    <property type="evidence" value="ECO:0000318"/>
    <property type="project" value="GO_Central"/>
</dbReference>
<dbReference type="GO" id="GO:0005764">
    <property type="term" value="C:lysosome"/>
    <property type="evidence" value="ECO:0007669"/>
    <property type="project" value="UniProtKB-SubCell"/>
</dbReference>
<dbReference type="GO" id="GO:0016020">
    <property type="term" value="C:membrane"/>
    <property type="evidence" value="ECO:0000318"/>
    <property type="project" value="GO_Central"/>
</dbReference>
<dbReference type="GO" id="GO:0061630">
    <property type="term" value="F:ubiquitin protein ligase activity"/>
    <property type="evidence" value="ECO:0000318"/>
    <property type="project" value="GO_Central"/>
</dbReference>
<dbReference type="GO" id="GO:0004842">
    <property type="term" value="F:ubiquitin-protein transferase activity"/>
    <property type="evidence" value="ECO:0000250"/>
    <property type="project" value="UniProtKB"/>
</dbReference>
<dbReference type="GO" id="GO:0008270">
    <property type="term" value="F:zinc ion binding"/>
    <property type="evidence" value="ECO:0007669"/>
    <property type="project" value="UniProtKB-KW"/>
</dbReference>
<dbReference type="GO" id="GO:0043161">
    <property type="term" value="P:proteasome-mediated ubiquitin-dependent protein catabolic process"/>
    <property type="evidence" value="ECO:0000250"/>
    <property type="project" value="UniProtKB"/>
</dbReference>
<dbReference type="GO" id="GO:0070936">
    <property type="term" value="P:protein K48-linked ubiquitination"/>
    <property type="evidence" value="ECO:0000250"/>
    <property type="project" value="UniProtKB"/>
</dbReference>
<dbReference type="CDD" id="cd16695">
    <property type="entry name" value="mRING-CH-C4HC2H_ZNRF2"/>
    <property type="match status" value="1"/>
</dbReference>
<dbReference type="FunFam" id="3.30.40.10:FF:000235">
    <property type="entry name" value="E3 ubiquitin-protein ligase ZNRF1"/>
    <property type="match status" value="1"/>
</dbReference>
<dbReference type="Gene3D" id="3.30.40.10">
    <property type="entry name" value="Zinc/RING finger domain, C3HC4 (zinc finger)"/>
    <property type="match status" value="1"/>
</dbReference>
<dbReference type="InterPro" id="IPR001841">
    <property type="entry name" value="Znf_RING"/>
</dbReference>
<dbReference type="InterPro" id="IPR013083">
    <property type="entry name" value="Znf_RING/FYVE/PHD"/>
</dbReference>
<dbReference type="InterPro" id="IPR051878">
    <property type="entry name" value="ZNRF_ubiq-protein_ligase"/>
</dbReference>
<dbReference type="PANTHER" id="PTHR46661:SF2">
    <property type="entry name" value="E3 UBIQUITIN-PROTEIN LIGASE ZNRF1"/>
    <property type="match status" value="1"/>
</dbReference>
<dbReference type="PANTHER" id="PTHR46661">
    <property type="entry name" value="E3 UBIQUITIN-PROTEIN LIGASE ZNRF1-LIKE PROTEIN"/>
    <property type="match status" value="1"/>
</dbReference>
<dbReference type="Pfam" id="PF13639">
    <property type="entry name" value="zf-RING_2"/>
    <property type="match status" value="1"/>
</dbReference>
<dbReference type="SUPFAM" id="SSF57850">
    <property type="entry name" value="RING/U-box"/>
    <property type="match status" value="1"/>
</dbReference>
<dbReference type="PROSITE" id="PS50089">
    <property type="entry name" value="ZF_RING_2"/>
    <property type="match status" value="1"/>
</dbReference>